<feature type="chain" id="PRO_0000151463" description="Phosphoribosylamine--glycine ligase">
    <location>
        <begin position="1"/>
        <end position="422"/>
    </location>
</feature>
<feature type="domain" description="ATP-grasp" evidence="2">
    <location>
        <begin position="107"/>
        <end position="312"/>
    </location>
</feature>
<feature type="binding site" evidence="2">
    <location>
        <begin position="138"/>
        <end position="193"/>
    </location>
    <ligand>
        <name>ATP</name>
        <dbReference type="ChEBI" id="CHEBI:30616"/>
    </ligand>
</feature>
<feature type="binding site" evidence="2">
    <location>
        <position position="282"/>
    </location>
    <ligand>
        <name>Mg(2+)</name>
        <dbReference type="ChEBI" id="CHEBI:18420"/>
    </ligand>
</feature>
<feature type="binding site" evidence="2">
    <location>
        <position position="284"/>
    </location>
    <ligand>
        <name>Mg(2+)</name>
        <dbReference type="ChEBI" id="CHEBI:18420"/>
    </ligand>
</feature>
<name>PUR2_MYCLE</name>
<organism>
    <name type="scientific">Mycobacterium leprae (strain TN)</name>
    <dbReference type="NCBI Taxonomy" id="272631"/>
    <lineage>
        <taxon>Bacteria</taxon>
        <taxon>Bacillati</taxon>
        <taxon>Actinomycetota</taxon>
        <taxon>Actinomycetes</taxon>
        <taxon>Mycobacteriales</taxon>
        <taxon>Mycobacteriaceae</taxon>
        <taxon>Mycobacterium</taxon>
    </lineage>
</organism>
<evidence type="ECO:0000250" key="1"/>
<evidence type="ECO:0000255" key="2">
    <source>
        <dbReference type="HAMAP-Rule" id="MF_00138"/>
    </source>
</evidence>
<accession>Q50144</accession>
<accession>O05742</accession>
<keyword id="KW-0067">ATP-binding</keyword>
<keyword id="KW-0436">Ligase</keyword>
<keyword id="KW-0460">Magnesium</keyword>
<keyword id="KW-0464">Manganese</keyword>
<keyword id="KW-0479">Metal-binding</keyword>
<keyword id="KW-0547">Nucleotide-binding</keyword>
<keyword id="KW-0658">Purine biosynthesis</keyword>
<keyword id="KW-1185">Reference proteome</keyword>
<protein>
    <recommendedName>
        <fullName evidence="2">Phosphoribosylamine--glycine ligase</fullName>
        <ecNumber evidence="2">6.3.4.13</ecNumber>
    </recommendedName>
    <alternativeName>
        <fullName evidence="2">GARS</fullName>
    </alternativeName>
    <alternativeName>
        <fullName evidence="2">Glycinamide ribonucleotide synthetase</fullName>
    </alternativeName>
    <alternativeName>
        <fullName evidence="2">Phosphoribosylglycinamide synthetase</fullName>
    </alternativeName>
</protein>
<sequence length="422" mass="43984">MRVLVIGSGAREHALLLALSRDPQVKGLVVAPGNAGTARLAEQYDVDISSGEDIVALARDVRADMVVIGPELPLVLGVADAVRAAGIVCFGPSKDAARIEGSKAFAKEVMAAAGVRTSRSEIVNSPARLDAALDRFGPPVGDLSWVVKDDRLAAGKGVVVTSDRDVARTHAAGLLEAGHPVLLESYLDGPEVSLFCVVDGRTVLPLLPAQDFKRVGEGDTGPNTGGMGAYAPLPWLPDEVCQQALTSIVEPVAAELVQRGSPFRGLLYVGLAVTASGPAVVEFNCRFGDPETQVVLALLDSPLGQLLYAAGTGSLADFGELHWRSGAAVAVVLAAENYPRRPRVGDIVFGSEIEGVLHAGTTRRDDGVIVSSGGRVLSVVATGDDLSAARSQAYRIIGSIRLLGSHFRKDIGFSAAKGRIHI</sequence>
<dbReference type="EC" id="6.3.4.13" evidence="2"/>
<dbReference type="EMBL" id="U15187">
    <property type="protein sequence ID" value="AAA63135.1"/>
    <property type="molecule type" value="Genomic_DNA"/>
</dbReference>
<dbReference type="EMBL" id="Z95151">
    <property type="protein sequence ID" value="CAB08419.1"/>
    <property type="molecule type" value="Genomic_DNA"/>
</dbReference>
<dbReference type="EMBL" id="AL583924">
    <property type="protein sequence ID" value="CAC31191.1"/>
    <property type="molecule type" value="Genomic_DNA"/>
</dbReference>
<dbReference type="PIR" id="G87188">
    <property type="entry name" value="G87188"/>
</dbReference>
<dbReference type="RefSeq" id="NP_302459.1">
    <property type="nucleotide sequence ID" value="NC_002677.1"/>
</dbReference>
<dbReference type="RefSeq" id="WP_010908779.1">
    <property type="nucleotide sequence ID" value="NC_002677.1"/>
</dbReference>
<dbReference type="SMR" id="Q50144"/>
<dbReference type="STRING" id="272631.gene:17576093"/>
<dbReference type="KEGG" id="mle:ML2235"/>
<dbReference type="PATRIC" id="fig|272631.5.peg.4246"/>
<dbReference type="Leproma" id="ML2235"/>
<dbReference type="eggNOG" id="COG0151">
    <property type="taxonomic scope" value="Bacteria"/>
</dbReference>
<dbReference type="HOGENOM" id="CLU_027420_3_1_11"/>
<dbReference type="OrthoDB" id="9807240at2"/>
<dbReference type="UniPathway" id="UPA00074">
    <property type="reaction ID" value="UER00125"/>
</dbReference>
<dbReference type="Proteomes" id="UP000000806">
    <property type="component" value="Chromosome"/>
</dbReference>
<dbReference type="GO" id="GO:0005524">
    <property type="term" value="F:ATP binding"/>
    <property type="evidence" value="ECO:0007669"/>
    <property type="project" value="UniProtKB-KW"/>
</dbReference>
<dbReference type="GO" id="GO:0046872">
    <property type="term" value="F:metal ion binding"/>
    <property type="evidence" value="ECO:0007669"/>
    <property type="project" value="UniProtKB-KW"/>
</dbReference>
<dbReference type="GO" id="GO:0004637">
    <property type="term" value="F:phosphoribosylamine-glycine ligase activity"/>
    <property type="evidence" value="ECO:0007669"/>
    <property type="project" value="UniProtKB-UniRule"/>
</dbReference>
<dbReference type="GO" id="GO:0006189">
    <property type="term" value="P:'de novo' IMP biosynthetic process"/>
    <property type="evidence" value="ECO:0007669"/>
    <property type="project" value="UniProtKB-UniRule"/>
</dbReference>
<dbReference type="GO" id="GO:0009113">
    <property type="term" value="P:purine nucleobase biosynthetic process"/>
    <property type="evidence" value="ECO:0007669"/>
    <property type="project" value="InterPro"/>
</dbReference>
<dbReference type="Gene3D" id="3.40.50.20">
    <property type="match status" value="1"/>
</dbReference>
<dbReference type="Gene3D" id="3.30.1490.20">
    <property type="entry name" value="ATP-grasp fold, A domain"/>
    <property type="match status" value="1"/>
</dbReference>
<dbReference type="Gene3D" id="3.30.470.20">
    <property type="entry name" value="ATP-grasp fold, B domain"/>
    <property type="match status" value="1"/>
</dbReference>
<dbReference type="Gene3D" id="3.90.600.10">
    <property type="entry name" value="Phosphoribosylglycinamide synthetase, C-terminal domain"/>
    <property type="match status" value="1"/>
</dbReference>
<dbReference type="HAMAP" id="MF_00138">
    <property type="entry name" value="GARS"/>
    <property type="match status" value="1"/>
</dbReference>
<dbReference type="InterPro" id="IPR011761">
    <property type="entry name" value="ATP-grasp"/>
</dbReference>
<dbReference type="InterPro" id="IPR013815">
    <property type="entry name" value="ATP_grasp_subdomain_1"/>
</dbReference>
<dbReference type="InterPro" id="IPR016185">
    <property type="entry name" value="PreATP-grasp_dom_sf"/>
</dbReference>
<dbReference type="InterPro" id="IPR020561">
    <property type="entry name" value="PRibGlycinamid_synth_ATP-grasp"/>
</dbReference>
<dbReference type="InterPro" id="IPR000115">
    <property type="entry name" value="PRibGlycinamide_synth"/>
</dbReference>
<dbReference type="InterPro" id="IPR020560">
    <property type="entry name" value="PRibGlycinamide_synth_C-dom"/>
</dbReference>
<dbReference type="InterPro" id="IPR037123">
    <property type="entry name" value="PRibGlycinamide_synth_C_sf"/>
</dbReference>
<dbReference type="InterPro" id="IPR020559">
    <property type="entry name" value="PRibGlycinamide_synth_CS"/>
</dbReference>
<dbReference type="InterPro" id="IPR020562">
    <property type="entry name" value="PRibGlycinamide_synth_N"/>
</dbReference>
<dbReference type="InterPro" id="IPR011054">
    <property type="entry name" value="Rudment_hybrid_motif"/>
</dbReference>
<dbReference type="NCBIfam" id="TIGR00877">
    <property type="entry name" value="purD"/>
    <property type="match status" value="1"/>
</dbReference>
<dbReference type="PANTHER" id="PTHR43472">
    <property type="entry name" value="PHOSPHORIBOSYLAMINE--GLYCINE LIGASE"/>
    <property type="match status" value="1"/>
</dbReference>
<dbReference type="PANTHER" id="PTHR43472:SF1">
    <property type="entry name" value="PHOSPHORIBOSYLAMINE--GLYCINE LIGASE, CHLOROPLASTIC"/>
    <property type="match status" value="1"/>
</dbReference>
<dbReference type="Pfam" id="PF01071">
    <property type="entry name" value="GARS_A"/>
    <property type="match status" value="1"/>
</dbReference>
<dbReference type="Pfam" id="PF02843">
    <property type="entry name" value="GARS_C"/>
    <property type="match status" value="1"/>
</dbReference>
<dbReference type="Pfam" id="PF02844">
    <property type="entry name" value="GARS_N"/>
    <property type="match status" value="1"/>
</dbReference>
<dbReference type="SMART" id="SM01209">
    <property type="entry name" value="GARS_A"/>
    <property type="match status" value="1"/>
</dbReference>
<dbReference type="SMART" id="SM01210">
    <property type="entry name" value="GARS_C"/>
    <property type="match status" value="1"/>
</dbReference>
<dbReference type="SUPFAM" id="SSF56059">
    <property type="entry name" value="Glutathione synthetase ATP-binding domain-like"/>
    <property type="match status" value="1"/>
</dbReference>
<dbReference type="SUPFAM" id="SSF52440">
    <property type="entry name" value="PreATP-grasp domain"/>
    <property type="match status" value="1"/>
</dbReference>
<dbReference type="SUPFAM" id="SSF51246">
    <property type="entry name" value="Rudiment single hybrid motif"/>
    <property type="match status" value="1"/>
</dbReference>
<dbReference type="PROSITE" id="PS50975">
    <property type="entry name" value="ATP_GRASP"/>
    <property type="match status" value="1"/>
</dbReference>
<dbReference type="PROSITE" id="PS00184">
    <property type="entry name" value="GARS"/>
    <property type="match status" value="1"/>
</dbReference>
<proteinExistence type="inferred from homology"/>
<gene>
    <name evidence="2" type="primary">purD</name>
    <name type="ordered locus">ML2235</name>
    <name type="ORF">MLCB5.08</name>
</gene>
<reference key="1">
    <citation type="submission" date="1994-09" db="EMBL/GenBank/DDBJ databases">
        <authorList>
            <person name="Smith D.R."/>
            <person name="Robison K."/>
        </authorList>
    </citation>
    <scope>NUCLEOTIDE SEQUENCE [GENOMIC DNA]</scope>
</reference>
<reference key="2">
    <citation type="journal article" date="2001" name="Nature">
        <title>Massive gene decay in the leprosy bacillus.</title>
        <authorList>
            <person name="Cole S.T."/>
            <person name="Eiglmeier K."/>
            <person name="Parkhill J."/>
            <person name="James K.D."/>
            <person name="Thomson N.R."/>
            <person name="Wheeler P.R."/>
            <person name="Honore N."/>
            <person name="Garnier T."/>
            <person name="Churcher C.M."/>
            <person name="Harris D.E."/>
            <person name="Mungall K.L."/>
            <person name="Basham D."/>
            <person name="Brown D."/>
            <person name="Chillingworth T."/>
            <person name="Connor R."/>
            <person name="Davies R.M."/>
            <person name="Devlin K."/>
            <person name="Duthoy S."/>
            <person name="Feltwell T."/>
            <person name="Fraser A."/>
            <person name="Hamlin N."/>
            <person name="Holroyd S."/>
            <person name="Hornsby T."/>
            <person name="Jagels K."/>
            <person name="Lacroix C."/>
            <person name="Maclean J."/>
            <person name="Moule S."/>
            <person name="Murphy L.D."/>
            <person name="Oliver K."/>
            <person name="Quail M.A."/>
            <person name="Rajandream M.A."/>
            <person name="Rutherford K.M."/>
            <person name="Rutter S."/>
            <person name="Seeger K."/>
            <person name="Simon S."/>
            <person name="Simmonds M."/>
            <person name="Skelton J."/>
            <person name="Squares R."/>
            <person name="Squares S."/>
            <person name="Stevens K."/>
            <person name="Taylor K."/>
            <person name="Whitehead S."/>
            <person name="Woodward J.R."/>
            <person name="Barrell B.G."/>
        </authorList>
    </citation>
    <scope>NUCLEOTIDE SEQUENCE [LARGE SCALE GENOMIC DNA]</scope>
    <source>
        <strain>TN</strain>
    </source>
</reference>
<comment type="catalytic activity">
    <reaction evidence="2">
        <text>5-phospho-beta-D-ribosylamine + glycine + ATP = N(1)-(5-phospho-beta-D-ribosyl)glycinamide + ADP + phosphate + H(+)</text>
        <dbReference type="Rhea" id="RHEA:17453"/>
        <dbReference type="ChEBI" id="CHEBI:15378"/>
        <dbReference type="ChEBI" id="CHEBI:30616"/>
        <dbReference type="ChEBI" id="CHEBI:43474"/>
        <dbReference type="ChEBI" id="CHEBI:57305"/>
        <dbReference type="ChEBI" id="CHEBI:58681"/>
        <dbReference type="ChEBI" id="CHEBI:143788"/>
        <dbReference type="ChEBI" id="CHEBI:456216"/>
        <dbReference type="EC" id="6.3.4.13"/>
    </reaction>
</comment>
<comment type="cofactor">
    <cofactor evidence="1">
        <name>Mg(2+)</name>
        <dbReference type="ChEBI" id="CHEBI:18420"/>
    </cofactor>
    <cofactor evidence="1">
        <name>Mn(2+)</name>
        <dbReference type="ChEBI" id="CHEBI:29035"/>
    </cofactor>
    <text evidence="1">Binds 1 Mg(2+) or Mn(2+) ion per subunit.</text>
</comment>
<comment type="pathway">
    <text evidence="2">Purine metabolism; IMP biosynthesis via de novo pathway; N(1)-(5-phospho-D-ribosyl)glycinamide from 5-phospho-alpha-D-ribose 1-diphosphate: step 2/2.</text>
</comment>
<comment type="similarity">
    <text evidence="2">Belongs to the GARS family.</text>
</comment>